<proteinExistence type="evidence at transcript level"/>
<accession>Q5USW1</accession>
<protein>
    <recommendedName>
        <fullName>Growth/differentiation factor 8</fullName>
        <shortName>GDF-8</shortName>
    </recommendedName>
    <alternativeName>
        <fullName>Myostatin</fullName>
    </alternativeName>
</protein>
<feature type="signal peptide" evidence="3">
    <location>
        <begin position="1"/>
        <end position="18"/>
    </location>
</feature>
<feature type="propeptide" id="PRO_0000033932" evidence="3">
    <location>
        <begin position="19"/>
        <end position="266"/>
    </location>
</feature>
<feature type="chain" id="PRO_0000033933" description="Growth/differentiation factor 8">
    <location>
        <begin position="267"/>
        <end position="375"/>
    </location>
</feature>
<feature type="site" description="Cleavage" evidence="1">
    <location>
        <begin position="98"/>
        <end position="99"/>
    </location>
</feature>
<feature type="glycosylation site" description="N-linked (GlcNAc...) asparagine" evidence="3">
    <location>
        <position position="47"/>
    </location>
</feature>
<feature type="glycosylation site" description="N-linked (GlcNAc...) asparagine" evidence="3">
    <location>
        <position position="71"/>
    </location>
</feature>
<feature type="disulfide bond" evidence="2">
    <location>
        <begin position="272"/>
        <end position="282"/>
    </location>
</feature>
<feature type="disulfide bond" evidence="2">
    <location>
        <begin position="281"/>
        <end position="340"/>
    </location>
</feature>
<feature type="disulfide bond" evidence="2">
    <location>
        <begin position="309"/>
        <end position="372"/>
    </location>
</feature>
<feature type="disulfide bond" evidence="2">
    <location>
        <begin position="313"/>
        <end position="374"/>
    </location>
</feature>
<feature type="disulfide bond" description="Interchain" evidence="2">
    <location>
        <position position="339"/>
    </location>
</feature>
<keyword id="KW-0165">Cleavage on pair of basic residues</keyword>
<keyword id="KW-0202">Cytokine</keyword>
<keyword id="KW-1015">Disulfide bond</keyword>
<keyword id="KW-0325">Glycoprotein</keyword>
<keyword id="KW-0339">Growth factor</keyword>
<keyword id="KW-0358">Heparin-binding</keyword>
<keyword id="KW-0964">Secreted</keyword>
<keyword id="KW-0732">Signal</keyword>
<dbReference type="EMBL" id="AY629303">
    <property type="protein sequence ID" value="AAT40567.1"/>
    <property type="molecule type" value="mRNA"/>
</dbReference>
<dbReference type="SMR" id="Q5USW1"/>
<dbReference type="GlyCosmos" id="Q5USW1">
    <property type="glycosylation" value="2 sites, No reported glycans"/>
</dbReference>
<dbReference type="GO" id="GO:0005615">
    <property type="term" value="C:extracellular space"/>
    <property type="evidence" value="ECO:0007669"/>
    <property type="project" value="UniProtKB-KW"/>
</dbReference>
<dbReference type="GO" id="GO:0005125">
    <property type="term" value="F:cytokine activity"/>
    <property type="evidence" value="ECO:0007669"/>
    <property type="project" value="UniProtKB-KW"/>
</dbReference>
<dbReference type="GO" id="GO:0008083">
    <property type="term" value="F:growth factor activity"/>
    <property type="evidence" value="ECO:0007669"/>
    <property type="project" value="UniProtKB-KW"/>
</dbReference>
<dbReference type="GO" id="GO:0008201">
    <property type="term" value="F:heparin binding"/>
    <property type="evidence" value="ECO:0007669"/>
    <property type="project" value="UniProtKB-KW"/>
</dbReference>
<dbReference type="GO" id="GO:0042802">
    <property type="term" value="F:identical protein binding"/>
    <property type="evidence" value="ECO:0000250"/>
    <property type="project" value="UniProtKB"/>
</dbReference>
<dbReference type="GO" id="GO:0014839">
    <property type="term" value="P:myoblast migration involved in skeletal muscle regeneration"/>
    <property type="evidence" value="ECO:0000250"/>
    <property type="project" value="UniProtKB"/>
</dbReference>
<dbReference type="GO" id="GO:0010592">
    <property type="term" value="P:positive regulation of lamellipodium assembly"/>
    <property type="evidence" value="ECO:0000250"/>
    <property type="project" value="UniProtKB"/>
</dbReference>
<dbReference type="GO" id="GO:0010759">
    <property type="term" value="P:positive regulation of macrophage chemotaxis"/>
    <property type="evidence" value="ECO:0000250"/>
    <property type="project" value="UniProtKB"/>
</dbReference>
<dbReference type="CDD" id="cd19388">
    <property type="entry name" value="TGF_beta_GDF8"/>
    <property type="match status" value="1"/>
</dbReference>
<dbReference type="FunFam" id="2.60.120.970:FF:000001">
    <property type="entry name" value="Growth/differentiation factor 8"/>
    <property type="match status" value="1"/>
</dbReference>
<dbReference type="FunFam" id="2.10.90.10:FF:000006">
    <property type="entry name" value="growth/differentiation factor 8"/>
    <property type="match status" value="1"/>
</dbReference>
<dbReference type="Gene3D" id="2.60.120.970">
    <property type="match status" value="1"/>
</dbReference>
<dbReference type="Gene3D" id="2.10.90.10">
    <property type="entry name" value="Cystine-knot cytokines"/>
    <property type="match status" value="1"/>
</dbReference>
<dbReference type="InterPro" id="IPR029034">
    <property type="entry name" value="Cystine-knot_cytokine"/>
</dbReference>
<dbReference type="InterPro" id="IPR001839">
    <property type="entry name" value="TGF-b_C"/>
</dbReference>
<dbReference type="InterPro" id="IPR001111">
    <property type="entry name" value="TGF-b_propeptide"/>
</dbReference>
<dbReference type="InterPro" id="IPR015615">
    <property type="entry name" value="TGF-beta-rel"/>
</dbReference>
<dbReference type="InterPro" id="IPR017948">
    <property type="entry name" value="TGFb_CS"/>
</dbReference>
<dbReference type="PANTHER" id="PTHR11848:SF150">
    <property type="entry name" value="GROWTH_DIFFERENTIATION FACTOR 8"/>
    <property type="match status" value="1"/>
</dbReference>
<dbReference type="PANTHER" id="PTHR11848">
    <property type="entry name" value="TGF-BETA FAMILY"/>
    <property type="match status" value="1"/>
</dbReference>
<dbReference type="Pfam" id="PF00019">
    <property type="entry name" value="TGF_beta"/>
    <property type="match status" value="1"/>
</dbReference>
<dbReference type="Pfam" id="PF00688">
    <property type="entry name" value="TGFb_propeptide"/>
    <property type="match status" value="1"/>
</dbReference>
<dbReference type="SMART" id="SM00204">
    <property type="entry name" value="TGFB"/>
    <property type="match status" value="1"/>
</dbReference>
<dbReference type="SUPFAM" id="SSF57501">
    <property type="entry name" value="Cystine-knot cytokines"/>
    <property type="match status" value="1"/>
</dbReference>
<dbReference type="PROSITE" id="PS00250">
    <property type="entry name" value="TGF_BETA_1"/>
    <property type="match status" value="1"/>
</dbReference>
<dbReference type="PROSITE" id="PS51362">
    <property type="entry name" value="TGF_BETA_2"/>
    <property type="match status" value="1"/>
</dbReference>
<name>GDF8_BOSGA</name>
<comment type="function">
    <text evidence="1">Acts specifically as a negative regulator of skeletal muscle growth.</text>
</comment>
<comment type="subunit">
    <text evidence="1">Homodimer; disulfide-linked. Interacts with WFIKKN2, leading to inhibit its activity. Interacts with FSTL3.</text>
</comment>
<comment type="subcellular location">
    <subcellularLocation>
        <location evidence="1">Secreted</location>
    </subcellularLocation>
</comment>
<comment type="PTM">
    <text evidence="1">Synthesized as large precursor molecule that undergoes proteolytic cleavage to generate an N-terminal propeptide and a disulfide linked C-terminal dimer, which is the biologically active molecule. The circulating form consists of a latent complex of the C-terminal dimer and other proteins, including its propeptide, which maintain the C-terminal dimer in a latent, inactive state. Ligand activation requires additional cleavage of the prodomain by a tolloid-like metalloproteinase.</text>
</comment>
<comment type="similarity">
    <text evidence="4">Belongs to the TGF-beta family.</text>
</comment>
<organism>
    <name type="scientific">Bos gaurus</name>
    <name type="common">Seladang</name>
    <name type="synonym">Indian bison</name>
    <dbReference type="NCBI Taxonomy" id="9904"/>
    <lineage>
        <taxon>Eukaryota</taxon>
        <taxon>Metazoa</taxon>
        <taxon>Chordata</taxon>
        <taxon>Craniata</taxon>
        <taxon>Vertebrata</taxon>
        <taxon>Euteleostomi</taxon>
        <taxon>Mammalia</taxon>
        <taxon>Eutheria</taxon>
        <taxon>Laurasiatheria</taxon>
        <taxon>Artiodactyla</taxon>
        <taxon>Ruminantia</taxon>
        <taxon>Pecora</taxon>
        <taxon>Bovidae</taxon>
        <taxon>Bovinae</taxon>
        <taxon>Bos</taxon>
    </lineage>
</organism>
<reference key="1">
    <citation type="journal article" date="2004" name="Mol. Phylogenet. Evol.">
        <title>Myostatin rapid sequence evolution in ruminants predates domestication.</title>
        <authorList>
            <person name="Tellgren S."/>
            <person name="Berglund A.C."/>
            <person name="Savolainen P."/>
            <person name="Janis C.M."/>
            <person name="Liberles D.A."/>
        </authorList>
    </citation>
    <scope>NUCLEOTIDE SEQUENCE [MRNA]</scope>
</reference>
<evidence type="ECO:0000250" key="1">
    <source>
        <dbReference type="UniProtKB" id="O08689"/>
    </source>
</evidence>
<evidence type="ECO:0000250" key="2">
    <source>
        <dbReference type="UniProtKB" id="O14793"/>
    </source>
</evidence>
<evidence type="ECO:0000255" key="3"/>
<evidence type="ECO:0000305" key="4"/>
<gene>
    <name type="primary">MSTN</name>
    <name type="synonym">GDF8</name>
</gene>
<sequence length="375" mass="42551">MQKLQISVYIYLFMLIVAGPVDLNENSEQKENVEKEGLCNACLWRENTTSSRLEAIKIQILSKLRLETAPNISKDAIRQLLPKAPPLLELIDQFDVQRDASSDGSLEDDDYHARTETVITMPTESDLLTQVEGKPKCCFFKFSSKIQYNKLVKAQLWIYLRPVKTPATVFVQILRLIKPMKDGTRYTGIRSLKLDMNPGTGIWQSIDVKTVLQNWLKQPESNLGIEIKALDENGHDLAVTFPEPGEDGLTPFLEVKVTDTPKRSRRDFGLDCDEHSTESRCCRYPLTVDFEAFGWDWIIAPKRYKANYCSGECEFVFLQKYPHTHLVHQANPRGSAGPCCTPTKMSPINMLYFNGEGQIIYGKIPAMVVDRCGCS</sequence>